<sequence length="342" mass="37178">MTEAIKTDVLIVGAGPCGLFAVFELGLLDIKVHLVDILDKVGGQCAELYPEKPIYDIPGIPMITGHGLTESLMEQIKPFNPTIHLNEMIESVEKIGDPEFRVITNAGTVFECKVLVVAAGGGSFQPKRPPVPGVEAYEGKSVHYAVRKMEEFRGKDIVIVGGGDSALDWTLNLNPICKSMTLVHRRDDFRGAPHSVEQMRQLVASGKLDLKIGQITELQGDNGQLSGATIKLNDNSVAQIKCDAMLPFFGLTMKLGPVANWGLQLENNLIPVDTGTFETNVPGIFAIGDINTYPGKLKLILSGFHEGALMAQKAVKYVYPDKRVVFQYTTSSTNLQKKLGVN</sequence>
<dbReference type="EC" id="1.18.1.2" evidence="1"/>
<dbReference type="EMBL" id="CP000283">
    <property type="protein sequence ID" value="ABE38882.1"/>
    <property type="molecule type" value="Genomic_DNA"/>
</dbReference>
<dbReference type="SMR" id="Q13AK7"/>
<dbReference type="STRING" id="316057.RPD_1645"/>
<dbReference type="KEGG" id="rpd:RPD_1645"/>
<dbReference type="eggNOG" id="COG0492">
    <property type="taxonomic scope" value="Bacteria"/>
</dbReference>
<dbReference type="HOGENOM" id="CLU_031864_5_5_5"/>
<dbReference type="BioCyc" id="RPAL316057:RPD_RS08295-MONOMER"/>
<dbReference type="Proteomes" id="UP000001818">
    <property type="component" value="Chromosome"/>
</dbReference>
<dbReference type="GO" id="GO:0004324">
    <property type="term" value="F:ferredoxin-NADP+ reductase activity"/>
    <property type="evidence" value="ECO:0007669"/>
    <property type="project" value="UniProtKB-UniRule"/>
</dbReference>
<dbReference type="GO" id="GO:0050660">
    <property type="term" value="F:flavin adenine dinucleotide binding"/>
    <property type="evidence" value="ECO:0007669"/>
    <property type="project" value="UniProtKB-UniRule"/>
</dbReference>
<dbReference type="GO" id="GO:0050661">
    <property type="term" value="F:NADP binding"/>
    <property type="evidence" value="ECO:0007669"/>
    <property type="project" value="UniProtKB-UniRule"/>
</dbReference>
<dbReference type="Gene3D" id="3.50.50.60">
    <property type="entry name" value="FAD/NAD(P)-binding domain"/>
    <property type="match status" value="2"/>
</dbReference>
<dbReference type="HAMAP" id="MF_01685">
    <property type="entry name" value="FENR2"/>
    <property type="match status" value="1"/>
</dbReference>
<dbReference type="InterPro" id="IPR036188">
    <property type="entry name" value="FAD/NAD-bd_sf"/>
</dbReference>
<dbReference type="InterPro" id="IPR023753">
    <property type="entry name" value="FAD/NAD-binding_dom"/>
</dbReference>
<dbReference type="InterPro" id="IPR022890">
    <property type="entry name" value="Fd--NADP_Rdtase_type_2"/>
</dbReference>
<dbReference type="InterPro" id="IPR050097">
    <property type="entry name" value="Ferredoxin-NADP_redctase_2"/>
</dbReference>
<dbReference type="PANTHER" id="PTHR48105">
    <property type="entry name" value="THIOREDOXIN REDUCTASE 1-RELATED-RELATED"/>
    <property type="match status" value="1"/>
</dbReference>
<dbReference type="Pfam" id="PF07992">
    <property type="entry name" value="Pyr_redox_2"/>
    <property type="match status" value="1"/>
</dbReference>
<dbReference type="PRINTS" id="PR00368">
    <property type="entry name" value="FADPNR"/>
</dbReference>
<dbReference type="PRINTS" id="PR00469">
    <property type="entry name" value="PNDRDTASEII"/>
</dbReference>
<dbReference type="SUPFAM" id="SSF51905">
    <property type="entry name" value="FAD/NAD(P)-binding domain"/>
    <property type="match status" value="1"/>
</dbReference>
<organism>
    <name type="scientific">Rhodopseudomonas palustris (strain BisB5)</name>
    <dbReference type="NCBI Taxonomy" id="316057"/>
    <lineage>
        <taxon>Bacteria</taxon>
        <taxon>Pseudomonadati</taxon>
        <taxon>Pseudomonadota</taxon>
        <taxon>Alphaproteobacteria</taxon>
        <taxon>Hyphomicrobiales</taxon>
        <taxon>Nitrobacteraceae</taxon>
        <taxon>Rhodopseudomonas</taxon>
    </lineage>
</organism>
<accession>Q13AK7</accession>
<reference key="1">
    <citation type="submission" date="2006-03" db="EMBL/GenBank/DDBJ databases">
        <title>Complete sequence of Rhodopseudomonas palustris BisB5.</title>
        <authorList>
            <consortium name="US DOE Joint Genome Institute"/>
            <person name="Copeland A."/>
            <person name="Lucas S."/>
            <person name="Lapidus A."/>
            <person name="Barry K."/>
            <person name="Detter J.C."/>
            <person name="Glavina del Rio T."/>
            <person name="Hammon N."/>
            <person name="Israni S."/>
            <person name="Dalin E."/>
            <person name="Tice H."/>
            <person name="Pitluck S."/>
            <person name="Chain P."/>
            <person name="Malfatti S."/>
            <person name="Shin M."/>
            <person name="Vergez L."/>
            <person name="Schmutz J."/>
            <person name="Larimer F."/>
            <person name="Land M."/>
            <person name="Hauser L."/>
            <person name="Pelletier D.A."/>
            <person name="Kyrpides N."/>
            <person name="Lykidis A."/>
            <person name="Oda Y."/>
            <person name="Harwood C.S."/>
            <person name="Richardson P."/>
        </authorList>
    </citation>
    <scope>NUCLEOTIDE SEQUENCE [LARGE SCALE GENOMIC DNA]</scope>
    <source>
        <strain>BisB5</strain>
    </source>
</reference>
<name>FENR_RHOPS</name>
<protein>
    <recommendedName>
        <fullName evidence="1">Ferredoxin--NADP reductase</fullName>
        <shortName evidence="1">FNR</shortName>
        <shortName evidence="1">Fd-NADP(+) reductase</shortName>
        <ecNumber evidence="1">1.18.1.2</ecNumber>
    </recommendedName>
</protein>
<evidence type="ECO:0000255" key="1">
    <source>
        <dbReference type="HAMAP-Rule" id="MF_01685"/>
    </source>
</evidence>
<comment type="catalytic activity">
    <reaction evidence="1">
        <text>2 reduced [2Fe-2S]-[ferredoxin] + NADP(+) + H(+) = 2 oxidized [2Fe-2S]-[ferredoxin] + NADPH</text>
        <dbReference type="Rhea" id="RHEA:20125"/>
        <dbReference type="Rhea" id="RHEA-COMP:10000"/>
        <dbReference type="Rhea" id="RHEA-COMP:10001"/>
        <dbReference type="ChEBI" id="CHEBI:15378"/>
        <dbReference type="ChEBI" id="CHEBI:33737"/>
        <dbReference type="ChEBI" id="CHEBI:33738"/>
        <dbReference type="ChEBI" id="CHEBI:57783"/>
        <dbReference type="ChEBI" id="CHEBI:58349"/>
        <dbReference type="EC" id="1.18.1.2"/>
    </reaction>
</comment>
<comment type="cofactor">
    <cofactor evidence="1">
        <name>FAD</name>
        <dbReference type="ChEBI" id="CHEBI:57692"/>
    </cofactor>
    <text evidence="1">Binds 1 FAD per subunit.</text>
</comment>
<comment type="subunit">
    <text evidence="1">Homodimer.</text>
</comment>
<comment type="similarity">
    <text evidence="1">Belongs to the ferredoxin--NADP reductase type 2 family.</text>
</comment>
<feature type="chain" id="PRO_0000364916" description="Ferredoxin--NADP reductase">
    <location>
        <begin position="1"/>
        <end position="342"/>
    </location>
</feature>
<feature type="binding site" evidence="1">
    <location>
        <position position="17"/>
    </location>
    <ligand>
        <name>FAD</name>
        <dbReference type="ChEBI" id="CHEBI:57692"/>
    </ligand>
</feature>
<feature type="binding site" evidence="1">
    <location>
        <position position="36"/>
    </location>
    <ligand>
        <name>FAD</name>
        <dbReference type="ChEBI" id="CHEBI:57692"/>
    </ligand>
</feature>
<feature type="binding site" evidence="1">
    <location>
        <position position="44"/>
    </location>
    <ligand>
        <name>FAD</name>
        <dbReference type="ChEBI" id="CHEBI:57692"/>
    </ligand>
</feature>
<feature type="binding site" evidence="1">
    <location>
        <position position="49"/>
    </location>
    <ligand>
        <name>FAD</name>
        <dbReference type="ChEBI" id="CHEBI:57692"/>
    </ligand>
</feature>
<feature type="binding site" evidence="1">
    <location>
        <position position="89"/>
    </location>
    <ligand>
        <name>FAD</name>
        <dbReference type="ChEBI" id="CHEBI:57692"/>
    </ligand>
</feature>
<feature type="binding site" evidence="1">
    <location>
        <position position="124"/>
    </location>
    <ligand>
        <name>FAD</name>
        <dbReference type="ChEBI" id="CHEBI:57692"/>
    </ligand>
</feature>
<feature type="binding site" evidence="1">
    <location>
        <position position="289"/>
    </location>
    <ligand>
        <name>FAD</name>
        <dbReference type="ChEBI" id="CHEBI:57692"/>
    </ligand>
</feature>
<feature type="binding site" evidence="1">
    <location>
        <position position="330"/>
    </location>
    <ligand>
        <name>FAD</name>
        <dbReference type="ChEBI" id="CHEBI:57692"/>
    </ligand>
</feature>
<keyword id="KW-0274">FAD</keyword>
<keyword id="KW-0285">Flavoprotein</keyword>
<keyword id="KW-0521">NADP</keyword>
<keyword id="KW-0560">Oxidoreductase</keyword>
<proteinExistence type="inferred from homology"/>
<gene>
    <name type="ordered locus">RPD_1645</name>
</gene>